<proteinExistence type="inferred from homology"/>
<sequence length="408" mass="43782">MSLSVTRENFDEWMVPVYVPAPFIPVRGEGSRLWDQQGKEYIDFAGGIAVNALGHAHPALREALNEQANRFWHTGNGYTNEPALRLAKKLIDATFAERVFFCNSGAEANEAALKLARKYAHDRVGNHKSGIVAFKNAFHGRTLFTVSAGGQPTYSQDFAPLPPDIRHAAYNDLNSASALIDDNTCAVIVEPVQGEGGVIPATKAFLQGLRELCDRHQALLIFDEVQTGVGRTGELYAYMHYGVTPDILTTAKALGGGFPIGAMLTTQDYASVMTPGTHGTTYGGNPLATAVAGKVLDIINTPEMQNGVRQRHDAFIERLNTINVRFGMFSEIRGLGLLLGCVLQTEFAGKAKLIAQEAAKAGVMVLIAGGDVVRFAPALNVSDEEIATGLDRFALACERLQTGGASCG</sequence>
<keyword id="KW-0032">Aminotransferase</keyword>
<keyword id="KW-0056">Arginine metabolism</keyword>
<keyword id="KW-0663">Pyridoxal phosphate</keyword>
<keyword id="KW-0808">Transferase</keyword>
<dbReference type="EC" id="2.6.1.81" evidence="1"/>
<dbReference type="EMBL" id="CP001120">
    <property type="protein sequence ID" value="ACF68004.1"/>
    <property type="molecule type" value="Genomic_DNA"/>
</dbReference>
<dbReference type="RefSeq" id="WP_000059506.1">
    <property type="nucleotide sequence ID" value="NC_011083.1"/>
</dbReference>
<dbReference type="SMR" id="B4TGE0"/>
<dbReference type="KEGG" id="seh:SeHA_C1430"/>
<dbReference type="HOGENOM" id="CLU_016922_10_1_6"/>
<dbReference type="UniPathway" id="UPA00185">
    <property type="reaction ID" value="UER00281"/>
</dbReference>
<dbReference type="Proteomes" id="UP000001866">
    <property type="component" value="Chromosome"/>
</dbReference>
<dbReference type="GO" id="GO:0042802">
    <property type="term" value="F:identical protein binding"/>
    <property type="evidence" value="ECO:0007669"/>
    <property type="project" value="TreeGrafter"/>
</dbReference>
<dbReference type="GO" id="GO:0030170">
    <property type="term" value="F:pyridoxal phosphate binding"/>
    <property type="evidence" value="ECO:0007669"/>
    <property type="project" value="UniProtKB-UniRule"/>
</dbReference>
<dbReference type="GO" id="GO:0043825">
    <property type="term" value="F:succinylornithine transaminase activity"/>
    <property type="evidence" value="ECO:0007669"/>
    <property type="project" value="UniProtKB-EC"/>
</dbReference>
<dbReference type="GO" id="GO:1901607">
    <property type="term" value="P:alpha-amino acid biosynthetic process"/>
    <property type="evidence" value="ECO:0007669"/>
    <property type="project" value="UniProtKB-ARBA"/>
</dbReference>
<dbReference type="GO" id="GO:0019544">
    <property type="term" value="P:arginine catabolic process to glutamate"/>
    <property type="evidence" value="ECO:0007669"/>
    <property type="project" value="UniProtKB-UniRule"/>
</dbReference>
<dbReference type="GO" id="GO:0019545">
    <property type="term" value="P:arginine catabolic process to succinate"/>
    <property type="evidence" value="ECO:0007669"/>
    <property type="project" value="UniProtKB-UniRule"/>
</dbReference>
<dbReference type="GO" id="GO:0006593">
    <property type="term" value="P:ornithine catabolic process"/>
    <property type="evidence" value="ECO:0007669"/>
    <property type="project" value="InterPro"/>
</dbReference>
<dbReference type="CDD" id="cd00610">
    <property type="entry name" value="OAT_like"/>
    <property type="match status" value="1"/>
</dbReference>
<dbReference type="FunFam" id="3.40.640.10:FF:000004">
    <property type="entry name" value="Acetylornithine aminotransferase"/>
    <property type="match status" value="1"/>
</dbReference>
<dbReference type="Gene3D" id="3.90.1150.10">
    <property type="entry name" value="Aspartate Aminotransferase, domain 1"/>
    <property type="match status" value="1"/>
</dbReference>
<dbReference type="Gene3D" id="3.40.640.10">
    <property type="entry name" value="Type I PLP-dependent aspartate aminotransferase-like (Major domain)"/>
    <property type="match status" value="1"/>
</dbReference>
<dbReference type="HAMAP" id="MF_01107">
    <property type="entry name" value="ArgD_aminotrans_3"/>
    <property type="match status" value="1"/>
</dbReference>
<dbReference type="HAMAP" id="MF_01173">
    <property type="entry name" value="AstC_aminotrans_3"/>
    <property type="match status" value="1"/>
</dbReference>
<dbReference type="InterPro" id="IPR017652">
    <property type="entry name" value="Ac/SucOrn_transaminase_bac"/>
</dbReference>
<dbReference type="InterPro" id="IPR004636">
    <property type="entry name" value="AcOrn/SuccOrn_fam"/>
</dbReference>
<dbReference type="InterPro" id="IPR005814">
    <property type="entry name" value="Aminotrans_3"/>
</dbReference>
<dbReference type="InterPro" id="IPR049704">
    <property type="entry name" value="Aminotrans_3_PPA_site"/>
</dbReference>
<dbReference type="InterPro" id="IPR050103">
    <property type="entry name" value="Class-III_PLP-dep_AT"/>
</dbReference>
<dbReference type="InterPro" id="IPR015424">
    <property type="entry name" value="PyrdxlP-dep_Trfase"/>
</dbReference>
<dbReference type="InterPro" id="IPR015421">
    <property type="entry name" value="PyrdxlP-dep_Trfase_major"/>
</dbReference>
<dbReference type="InterPro" id="IPR015422">
    <property type="entry name" value="PyrdxlP-dep_Trfase_small"/>
</dbReference>
<dbReference type="InterPro" id="IPR001763">
    <property type="entry name" value="Rhodanese-like_dom"/>
</dbReference>
<dbReference type="InterPro" id="IPR026330">
    <property type="entry name" value="SOAT"/>
</dbReference>
<dbReference type="NCBIfam" id="TIGR03246">
    <property type="entry name" value="arg_catab_astC"/>
    <property type="match status" value="1"/>
</dbReference>
<dbReference type="NCBIfam" id="TIGR00707">
    <property type="entry name" value="argD"/>
    <property type="match status" value="1"/>
</dbReference>
<dbReference type="NCBIfam" id="NF002325">
    <property type="entry name" value="PRK01278.1"/>
    <property type="match status" value="1"/>
</dbReference>
<dbReference type="NCBIfam" id="NF003468">
    <property type="entry name" value="PRK05093.1"/>
    <property type="match status" value="1"/>
</dbReference>
<dbReference type="NCBIfam" id="NF009047">
    <property type="entry name" value="PRK12381.1"/>
    <property type="match status" value="1"/>
</dbReference>
<dbReference type="PANTHER" id="PTHR11986">
    <property type="entry name" value="AMINOTRANSFERASE CLASS III"/>
    <property type="match status" value="1"/>
</dbReference>
<dbReference type="PANTHER" id="PTHR11986:SF113">
    <property type="entry name" value="SUCCINYLORNITHINE TRANSAMINASE"/>
    <property type="match status" value="1"/>
</dbReference>
<dbReference type="Pfam" id="PF00202">
    <property type="entry name" value="Aminotran_3"/>
    <property type="match status" value="1"/>
</dbReference>
<dbReference type="PIRSF" id="PIRSF000521">
    <property type="entry name" value="Transaminase_4ab_Lys_Orn"/>
    <property type="match status" value="1"/>
</dbReference>
<dbReference type="SUPFAM" id="SSF53383">
    <property type="entry name" value="PLP-dependent transferases"/>
    <property type="match status" value="1"/>
</dbReference>
<dbReference type="PROSITE" id="PS00600">
    <property type="entry name" value="AA_TRANSFER_CLASS_3"/>
    <property type="match status" value="1"/>
</dbReference>
<evidence type="ECO:0000255" key="1">
    <source>
        <dbReference type="HAMAP-Rule" id="MF_01173"/>
    </source>
</evidence>
<feature type="chain" id="PRO_1000164393" description="Succinylornithine transaminase">
    <location>
        <begin position="1"/>
        <end position="408"/>
    </location>
</feature>
<feature type="modified residue" description="N6-(pyridoxal phosphate)lysine" evidence="1">
    <location>
        <position position="252"/>
    </location>
</feature>
<accession>B4TGE0</accession>
<organism>
    <name type="scientific">Salmonella heidelberg (strain SL476)</name>
    <dbReference type="NCBI Taxonomy" id="454169"/>
    <lineage>
        <taxon>Bacteria</taxon>
        <taxon>Pseudomonadati</taxon>
        <taxon>Pseudomonadota</taxon>
        <taxon>Gammaproteobacteria</taxon>
        <taxon>Enterobacterales</taxon>
        <taxon>Enterobacteriaceae</taxon>
        <taxon>Salmonella</taxon>
    </lineage>
</organism>
<name>ASTC_SALHS</name>
<protein>
    <recommendedName>
        <fullName evidence="1">Succinylornithine transaminase</fullName>
        <ecNumber evidence="1">2.6.1.81</ecNumber>
    </recommendedName>
    <alternativeName>
        <fullName evidence="1">Succinylornithine aminotransferase</fullName>
    </alternativeName>
</protein>
<comment type="function">
    <text evidence="1">Catalyzes the transamination of N(2)-succinylornithine and alpha-ketoglutarate into N(2)-succinylglutamate semialdehyde and glutamate. Can also act as an acetylornithine aminotransferase.</text>
</comment>
<comment type="catalytic activity">
    <reaction evidence="1">
        <text>N(2)-succinyl-L-ornithine + 2-oxoglutarate = N-succinyl-L-glutamate 5-semialdehyde + L-glutamate</text>
        <dbReference type="Rhea" id="RHEA:16953"/>
        <dbReference type="ChEBI" id="CHEBI:16810"/>
        <dbReference type="ChEBI" id="CHEBI:29985"/>
        <dbReference type="ChEBI" id="CHEBI:58514"/>
        <dbReference type="ChEBI" id="CHEBI:58520"/>
        <dbReference type="EC" id="2.6.1.81"/>
    </reaction>
</comment>
<comment type="cofactor">
    <cofactor evidence="1">
        <name>pyridoxal 5'-phosphate</name>
        <dbReference type="ChEBI" id="CHEBI:597326"/>
    </cofactor>
</comment>
<comment type="pathway">
    <text evidence="1">Amino-acid degradation; L-arginine degradation via AST pathway; L-glutamate and succinate from L-arginine: step 3/5.</text>
</comment>
<comment type="similarity">
    <text evidence="1">Belongs to the class-III pyridoxal-phosphate-dependent aminotransferase family. AstC subfamily.</text>
</comment>
<gene>
    <name evidence="1" type="primary">astC</name>
    <name evidence="1" type="synonym">argM</name>
    <name type="ordered locus">SeHA_C1430</name>
</gene>
<reference key="1">
    <citation type="journal article" date="2011" name="J. Bacteriol.">
        <title>Comparative genomics of 28 Salmonella enterica isolates: evidence for CRISPR-mediated adaptive sublineage evolution.</title>
        <authorList>
            <person name="Fricke W.F."/>
            <person name="Mammel M.K."/>
            <person name="McDermott P.F."/>
            <person name="Tartera C."/>
            <person name="White D.G."/>
            <person name="Leclerc J.E."/>
            <person name="Ravel J."/>
            <person name="Cebula T.A."/>
        </authorList>
    </citation>
    <scope>NUCLEOTIDE SEQUENCE [LARGE SCALE GENOMIC DNA]</scope>
    <source>
        <strain>SL476</strain>
    </source>
</reference>